<reference key="1">
    <citation type="journal article" date="2000" name="Science">
        <title>The genome sequence of Drosophila melanogaster.</title>
        <authorList>
            <person name="Adams M.D."/>
            <person name="Celniker S.E."/>
            <person name="Holt R.A."/>
            <person name="Evans C.A."/>
            <person name="Gocayne J.D."/>
            <person name="Amanatides P.G."/>
            <person name="Scherer S.E."/>
            <person name="Li P.W."/>
            <person name="Hoskins R.A."/>
            <person name="Galle R.F."/>
            <person name="George R.A."/>
            <person name="Lewis S.E."/>
            <person name="Richards S."/>
            <person name="Ashburner M."/>
            <person name="Henderson S.N."/>
            <person name="Sutton G.G."/>
            <person name="Wortman J.R."/>
            <person name="Yandell M.D."/>
            <person name="Zhang Q."/>
            <person name="Chen L.X."/>
            <person name="Brandon R.C."/>
            <person name="Rogers Y.-H.C."/>
            <person name="Blazej R.G."/>
            <person name="Champe M."/>
            <person name="Pfeiffer B.D."/>
            <person name="Wan K.H."/>
            <person name="Doyle C."/>
            <person name="Baxter E.G."/>
            <person name="Helt G."/>
            <person name="Nelson C.R."/>
            <person name="Miklos G.L.G."/>
            <person name="Abril J.F."/>
            <person name="Agbayani A."/>
            <person name="An H.-J."/>
            <person name="Andrews-Pfannkoch C."/>
            <person name="Baldwin D."/>
            <person name="Ballew R.M."/>
            <person name="Basu A."/>
            <person name="Baxendale J."/>
            <person name="Bayraktaroglu L."/>
            <person name="Beasley E.M."/>
            <person name="Beeson K.Y."/>
            <person name="Benos P.V."/>
            <person name="Berman B.P."/>
            <person name="Bhandari D."/>
            <person name="Bolshakov S."/>
            <person name="Borkova D."/>
            <person name="Botchan M.R."/>
            <person name="Bouck J."/>
            <person name="Brokstein P."/>
            <person name="Brottier P."/>
            <person name="Burtis K.C."/>
            <person name="Busam D.A."/>
            <person name="Butler H."/>
            <person name="Cadieu E."/>
            <person name="Center A."/>
            <person name="Chandra I."/>
            <person name="Cherry J.M."/>
            <person name="Cawley S."/>
            <person name="Dahlke C."/>
            <person name="Davenport L.B."/>
            <person name="Davies P."/>
            <person name="de Pablos B."/>
            <person name="Delcher A."/>
            <person name="Deng Z."/>
            <person name="Mays A.D."/>
            <person name="Dew I."/>
            <person name="Dietz S.M."/>
            <person name="Dodson K."/>
            <person name="Doup L.E."/>
            <person name="Downes M."/>
            <person name="Dugan-Rocha S."/>
            <person name="Dunkov B.C."/>
            <person name="Dunn P."/>
            <person name="Durbin K.J."/>
            <person name="Evangelista C.C."/>
            <person name="Ferraz C."/>
            <person name="Ferriera S."/>
            <person name="Fleischmann W."/>
            <person name="Fosler C."/>
            <person name="Gabrielian A.E."/>
            <person name="Garg N.S."/>
            <person name="Gelbart W.M."/>
            <person name="Glasser K."/>
            <person name="Glodek A."/>
            <person name="Gong F."/>
            <person name="Gorrell J.H."/>
            <person name="Gu Z."/>
            <person name="Guan P."/>
            <person name="Harris M."/>
            <person name="Harris N.L."/>
            <person name="Harvey D.A."/>
            <person name="Heiman T.J."/>
            <person name="Hernandez J.R."/>
            <person name="Houck J."/>
            <person name="Hostin D."/>
            <person name="Houston K.A."/>
            <person name="Howland T.J."/>
            <person name="Wei M.-H."/>
            <person name="Ibegwam C."/>
            <person name="Jalali M."/>
            <person name="Kalush F."/>
            <person name="Karpen G.H."/>
            <person name="Ke Z."/>
            <person name="Kennison J.A."/>
            <person name="Ketchum K.A."/>
            <person name="Kimmel B.E."/>
            <person name="Kodira C.D."/>
            <person name="Kraft C.L."/>
            <person name="Kravitz S."/>
            <person name="Kulp D."/>
            <person name="Lai Z."/>
            <person name="Lasko P."/>
            <person name="Lei Y."/>
            <person name="Levitsky A.A."/>
            <person name="Li J.H."/>
            <person name="Li Z."/>
            <person name="Liang Y."/>
            <person name="Lin X."/>
            <person name="Liu X."/>
            <person name="Mattei B."/>
            <person name="McIntosh T.C."/>
            <person name="McLeod M.P."/>
            <person name="McPherson D."/>
            <person name="Merkulov G."/>
            <person name="Milshina N.V."/>
            <person name="Mobarry C."/>
            <person name="Morris J."/>
            <person name="Moshrefi A."/>
            <person name="Mount S.M."/>
            <person name="Moy M."/>
            <person name="Murphy B."/>
            <person name="Murphy L."/>
            <person name="Muzny D.M."/>
            <person name="Nelson D.L."/>
            <person name="Nelson D.R."/>
            <person name="Nelson K.A."/>
            <person name="Nixon K."/>
            <person name="Nusskern D.R."/>
            <person name="Pacleb J.M."/>
            <person name="Palazzolo M."/>
            <person name="Pittman G.S."/>
            <person name="Pan S."/>
            <person name="Pollard J."/>
            <person name="Puri V."/>
            <person name="Reese M.G."/>
            <person name="Reinert K."/>
            <person name="Remington K."/>
            <person name="Saunders R.D.C."/>
            <person name="Scheeler F."/>
            <person name="Shen H."/>
            <person name="Shue B.C."/>
            <person name="Siden-Kiamos I."/>
            <person name="Simpson M."/>
            <person name="Skupski M.P."/>
            <person name="Smith T.J."/>
            <person name="Spier E."/>
            <person name="Spradling A.C."/>
            <person name="Stapleton M."/>
            <person name="Strong R."/>
            <person name="Sun E."/>
            <person name="Svirskas R."/>
            <person name="Tector C."/>
            <person name="Turner R."/>
            <person name="Venter E."/>
            <person name="Wang A.H."/>
            <person name="Wang X."/>
            <person name="Wang Z.-Y."/>
            <person name="Wassarman D.A."/>
            <person name="Weinstock G.M."/>
            <person name="Weissenbach J."/>
            <person name="Williams S.M."/>
            <person name="Woodage T."/>
            <person name="Worley K.C."/>
            <person name="Wu D."/>
            <person name="Yang S."/>
            <person name="Yao Q.A."/>
            <person name="Ye J."/>
            <person name="Yeh R.-F."/>
            <person name="Zaveri J.S."/>
            <person name="Zhan M."/>
            <person name="Zhang G."/>
            <person name="Zhao Q."/>
            <person name="Zheng L."/>
            <person name="Zheng X.H."/>
            <person name="Zhong F.N."/>
            <person name="Zhong W."/>
            <person name="Zhou X."/>
            <person name="Zhu S.C."/>
            <person name="Zhu X."/>
            <person name="Smith H.O."/>
            <person name="Gibbs R.A."/>
            <person name="Myers E.W."/>
            <person name="Rubin G.M."/>
            <person name="Venter J.C."/>
        </authorList>
    </citation>
    <scope>NUCLEOTIDE SEQUENCE [LARGE SCALE GENOMIC DNA]</scope>
    <source>
        <strain>Berkeley</strain>
    </source>
</reference>
<reference key="2">
    <citation type="journal article" date="2002" name="Genome Biol.">
        <title>Annotation of the Drosophila melanogaster euchromatic genome: a systematic review.</title>
        <authorList>
            <person name="Misra S."/>
            <person name="Crosby M.A."/>
            <person name="Mungall C.J."/>
            <person name="Matthews B.B."/>
            <person name="Campbell K.S."/>
            <person name="Hradecky P."/>
            <person name="Huang Y."/>
            <person name="Kaminker J.S."/>
            <person name="Millburn G.H."/>
            <person name="Prochnik S.E."/>
            <person name="Smith C.D."/>
            <person name="Tupy J.L."/>
            <person name="Whitfield E.J."/>
            <person name="Bayraktaroglu L."/>
            <person name="Berman B.P."/>
            <person name="Bettencourt B.R."/>
            <person name="Celniker S.E."/>
            <person name="de Grey A.D.N.J."/>
            <person name="Drysdale R.A."/>
            <person name="Harris N.L."/>
            <person name="Richter J."/>
            <person name="Russo S."/>
            <person name="Schroeder A.J."/>
            <person name="Shu S.Q."/>
            <person name="Stapleton M."/>
            <person name="Yamada C."/>
            <person name="Ashburner M."/>
            <person name="Gelbart W.M."/>
            <person name="Rubin G.M."/>
            <person name="Lewis S.E."/>
        </authorList>
    </citation>
    <scope>GENOME REANNOTATION</scope>
    <source>
        <strain>Berkeley</strain>
    </source>
</reference>
<reference key="3">
    <citation type="journal article" date="2002" name="Genome Biol.">
        <title>A Drosophila full-length cDNA resource.</title>
        <authorList>
            <person name="Stapleton M."/>
            <person name="Carlson J.W."/>
            <person name="Brokstein P."/>
            <person name="Yu C."/>
            <person name="Champe M."/>
            <person name="George R.A."/>
            <person name="Guarin H."/>
            <person name="Kronmiller B."/>
            <person name="Pacleb J.M."/>
            <person name="Park S."/>
            <person name="Wan K.H."/>
            <person name="Rubin G.M."/>
            <person name="Celniker S.E."/>
        </authorList>
    </citation>
    <scope>NUCLEOTIDE SEQUENCE [LARGE SCALE MRNA]</scope>
    <source>
        <strain>Berkeley</strain>
        <tissue>Head</tissue>
    </source>
</reference>
<reference key="4">
    <citation type="journal article" date="2008" name="Mol. Biol. Evol.">
        <title>Effects of X-linkage and sex-biased gene expression on the rate of adaptive protein evolution in Drosophila.</title>
        <authorList>
            <person name="Baines J.F."/>
            <person name="Sawyer S.A."/>
            <person name="Hartl D.L."/>
            <person name="Parsch J."/>
        </authorList>
    </citation>
    <scope>NUCLEOTIDE SEQUENCE [GENOMIC DNA] OF 22-317</scope>
    <scope>VARIANTS ALA-105; ARG-147; ARG-148; LEU-149; LEU-214 AND ILE-218</scope>
    <source>
        <strain>ZBMEL131</strain>
        <strain>ZBMEL145</strain>
        <strain>ZBMEL157</strain>
        <strain>ZBMEL186</strain>
        <strain>ZBMEL229</strain>
        <strain>ZBMEL377</strain>
        <strain>ZBMEL384</strain>
        <strain>ZBMEL84</strain>
        <strain>ZBMEL95</strain>
    </source>
</reference>
<accession>Q9VXV9</accession>
<accession>B4F678</accession>
<accession>B4F682</accession>
<accession>B4F683</accession>
<accession>B4F685</accession>
<evidence type="ECO:0000255" key="1"/>
<evidence type="ECO:0000269" key="2">
    <source>
    </source>
</evidence>
<evidence type="ECO:0000305" key="3"/>
<name>WCSD_DROME</name>
<comment type="subcellular location">
    <subcellularLocation>
        <location evidence="3">Membrane</location>
        <topology evidence="3">Single-pass membrane protein</topology>
    </subcellularLocation>
</comment>
<comment type="similarity">
    <text evidence="3">Belongs to the WSCD family.</text>
</comment>
<proteinExistence type="evidence at transcript level"/>
<gene>
    <name type="ORF">CG9164</name>
</gene>
<organism>
    <name type="scientific">Drosophila melanogaster</name>
    <name type="common">Fruit fly</name>
    <dbReference type="NCBI Taxonomy" id="7227"/>
    <lineage>
        <taxon>Eukaryota</taxon>
        <taxon>Metazoa</taxon>
        <taxon>Ecdysozoa</taxon>
        <taxon>Arthropoda</taxon>
        <taxon>Hexapoda</taxon>
        <taxon>Insecta</taxon>
        <taxon>Pterygota</taxon>
        <taxon>Neoptera</taxon>
        <taxon>Endopterygota</taxon>
        <taxon>Diptera</taxon>
        <taxon>Brachycera</taxon>
        <taxon>Muscomorpha</taxon>
        <taxon>Ephydroidea</taxon>
        <taxon>Drosophilidae</taxon>
        <taxon>Drosophila</taxon>
        <taxon>Sophophora</taxon>
    </lineage>
</organism>
<keyword id="KW-0325">Glycoprotein</keyword>
<keyword id="KW-0472">Membrane</keyword>
<keyword id="KW-1185">Reference proteome</keyword>
<keyword id="KW-0812">Transmembrane</keyword>
<keyword id="KW-1133">Transmembrane helix</keyword>
<sequence length="317" mass="36608">MALQGWRFFGVSATIIIYIGGVLFLSMNNIPGSHPKRPRIERFAEFPSFHSPRFPMPSRKMTIRWCRDLKYINRDLPIYADYKSDFYTALPSDVSAALQSLPALTALASFPGSGNTWLRYLLQQATGILTGSIYKDYGLLKTGFPAENVCNSSVLLVKTHEWGSKAWAPFSKAILLVRDPEKAIIAEFNRQSGGHIGFASPDRYKRTKGKYWQQFVSNKLKGWEMMNLSWARNFTGSIKVVFYDDLVHHTERELRSILDFLQFPINEQLMRCAIMRKEGIFRRKKRLLSFDPYTESMRAEVQNRRRIVYGLLGRQEP</sequence>
<feature type="chain" id="PRO_0000305069" description="WSCD family member CG9164">
    <location>
        <begin position="1"/>
        <end position="317"/>
    </location>
</feature>
<feature type="transmembrane region" description="Helical" evidence="1">
    <location>
        <begin position="8"/>
        <end position="28"/>
    </location>
</feature>
<feature type="glycosylation site" description="N-linked (GlcNAc...) asparagine" evidence="1">
    <location>
        <position position="151"/>
    </location>
</feature>
<feature type="glycosylation site" description="N-linked (GlcNAc...) asparagine" evidence="1">
    <location>
        <position position="227"/>
    </location>
</feature>
<feature type="glycosylation site" description="N-linked (GlcNAc...) asparagine" evidence="1">
    <location>
        <position position="233"/>
    </location>
</feature>
<feature type="sequence variant" description="In strain: ZBMEL377." evidence="2">
    <original>T</original>
    <variation>A</variation>
    <location>
        <position position="105"/>
    </location>
</feature>
<feature type="sequence variant" description="In strain: ZBMEL157." evidence="2">
    <original>E</original>
    <variation>R</variation>
    <location>
        <position position="147"/>
    </location>
</feature>
<feature type="sequence variant" description="In strain: ZBMEL157." evidence="2">
    <original>N</original>
    <variation>R</variation>
    <location>
        <position position="148"/>
    </location>
</feature>
<feature type="sequence variant" description="In strain: ZBMEL157." evidence="2">
    <original>V</original>
    <variation>L</variation>
    <location>
        <position position="149"/>
    </location>
</feature>
<feature type="sequence variant" description="In strain: ZBMEL186." evidence="2">
    <original>Q</original>
    <variation>L</variation>
    <location>
        <position position="214"/>
    </location>
</feature>
<feature type="sequence variant" description="In strain: ZBMEL186." evidence="2">
    <original>N</original>
    <variation>I</variation>
    <location>
        <position position="218"/>
    </location>
</feature>
<dbReference type="EMBL" id="AE014298">
    <property type="protein sequence ID" value="AAN09664.1"/>
    <property type="molecule type" value="Genomic_DNA"/>
</dbReference>
<dbReference type="EMBL" id="AE014298">
    <property type="protein sequence ID" value="AAN09665.1"/>
    <property type="molecule type" value="Genomic_DNA"/>
</dbReference>
<dbReference type="EMBL" id="AY069087">
    <property type="protein sequence ID" value="AAL39232.1"/>
    <property type="molecule type" value="mRNA"/>
</dbReference>
<dbReference type="EMBL" id="AM999314">
    <property type="protein sequence ID" value="CAQ53676.1"/>
    <property type="molecule type" value="Genomic_DNA"/>
</dbReference>
<dbReference type="EMBL" id="AM999315">
    <property type="protein sequence ID" value="CAQ53677.1"/>
    <property type="molecule type" value="Genomic_DNA"/>
</dbReference>
<dbReference type="EMBL" id="AM999316">
    <property type="protein sequence ID" value="CAQ53678.1"/>
    <property type="molecule type" value="Genomic_DNA"/>
</dbReference>
<dbReference type="EMBL" id="AM999317">
    <property type="protein sequence ID" value="CAQ53679.1"/>
    <property type="molecule type" value="Genomic_DNA"/>
</dbReference>
<dbReference type="EMBL" id="AM999318">
    <property type="protein sequence ID" value="CAQ53680.1"/>
    <property type="molecule type" value="Genomic_DNA"/>
</dbReference>
<dbReference type="EMBL" id="AM999319">
    <property type="protein sequence ID" value="CAQ53681.1"/>
    <property type="molecule type" value="Genomic_DNA"/>
</dbReference>
<dbReference type="EMBL" id="AM999320">
    <property type="protein sequence ID" value="CAQ53682.1"/>
    <property type="molecule type" value="Genomic_DNA"/>
</dbReference>
<dbReference type="EMBL" id="AM999321">
    <property type="protein sequence ID" value="CAQ53683.1"/>
    <property type="molecule type" value="Genomic_DNA"/>
</dbReference>
<dbReference type="EMBL" id="AM999322">
    <property type="protein sequence ID" value="CAQ53684.1"/>
    <property type="molecule type" value="Genomic_DNA"/>
</dbReference>
<dbReference type="RefSeq" id="NP_573021.1">
    <property type="nucleotide sequence ID" value="NM_132793.3"/>
</dbReference>
<dbReference type="RefSeq" id="NP_727846.1">
    <property type="nucleotide sequence ID" value="NM_167439.2"/>
</dbReference>
<dbReference type="RefSeq" id="NP_727847.1">
    <property type="nucleotide sequence ID" value="NM_167440.3"/>
</dbReference>
<dbReference type="SMR" id="Q9VXV9"/>
<dbReference type="FunCoup" id="Q9VXV9">
    <property type="interactions" value="3"/>
</dbReference>
<dbReference type="STRING" id="7227.FBpp0310008"/>
<dbReference type="GlyGen" id="Q9VXV9">
    <property type="glycosylation" value="3 sites"/>
</dbReference>
<dbReference type="PaxDb" id="7227-FBpp0073829"/>
<dbReference type="DNASU" id="32467"/>
<dbReference type="EnsemblMetazoa" id="FBtr0074012">
    <property type="protein sequence ID" value="FBpp0073829"/>
    <property type="gene ID" value="FBgn0030634"/>
</dbReference>
<dbReference type="EnsemblMetazoa" id="FBtr0074014">
    <property type="protein sequence ID" value="FBpp0073831"/>
    <property type="gene ID" value="FBgn0030634"/>
</dbReference>
<dbReference type="EnsemblMetazoa" id="FBtr0343351">
    <property type="protein sequence ID" value="FBpp0310008"/>
    <property type="gene ID" value="FBgn0030634"/>
</dbReference>
<dbReference type="GeneID" id="32467"/>
<dbReference type="KEGG" id="dme:Dmel_CG9164"/>
<dbReference type="UCSC" id="CG9164-RA">
    <property type="organism name" value="d. melanogaster"/>
</dbReference>
<dbReference type="AGR" id="FB:FBgn0030634"/>
<dbReference type="FlyBase" id="FBgn0030634">
    <property type="gene designation" value="CG9164"/>
</dbReference>
<dbReference type="VEuPathDB" id="VectorBase:FBgn0030634"/>
<dbReference type="eggNOG" id="KOG4157">
    <property type="taxonomic scope" value="Eukaryota"/>
</dbReference>
<dbReference type="GeneTree" id="ENSGT00940000169474"/>
<dbReference type="HOGENOM" id="CLU_052719_0_0_1"/>
<dbReference type="InParanoid" id="Q9VXV9"/>
<dbReference type="OMA" id="EFLQFPV"/>
<dbReference type="OrthoDB" id="5985073at2759"/>
<dbReference type="PhylomeDB" id="Q9VXV9"/>
<dbReference type="BioGRID-ORCS" id="32467">
    <property type="hits" value="0 hits in 3 CRISPR screens"/>
</dbReference>
<dbReference type="GenomeRNAi" id="32467"/>
<dbReference type="PRO" id="PR:Q9VXV9"/>
<dbReference type="Proteomes" id="UP000000803">
    <property type="component" value="Chromosome X"/>
</dbReference>
<dbReference type="Bgee" id="FBgn0030634">
    <property type="expression patterns" value="Expressed in transmedullary neuron Tm5c (Drosophila) in brain and 86 other cell types or tissues"/>
</dbReference>
<dbReference type="ExpressionAtlas" id="Q9VXV9">
    <property type="expression patterns" value="baseline and differential"/>
</dbReference>
<dbReference type="GO" id="GO:0016020">
    <property type="term" value="C:membrane"/>
    <property type="evidence" value="ECO:0007669"/>
    <property type="project" value="UniProtKB-SubCell"/>
</dbReference>
<dbReference type="Gene3D" id="3.40.50.300">
    <property type="entry name" value="P-loop containing nucleotide triphosphate hydrolases"/>
    <property type="match status" value="1"/>
</dbReference>
<dbReference type="InterPro" id="IPR027417">
    <property type="entry name" value="P-loop_NTPase"/>
</dbReference>
<dbReference type="InterPro" id="IPR051589">
    <property type="entry name" value="Sialate-O-sulfotransferase"/>
</dbReference>
<dbReference type="PANTHER" id="PTHR45964">
    <property type="entry name" value="WSCD FAMILY MEMBER CG9164"/>
    <property type="match status" value="1"/>
</dbReference>
<dbReference type="PANTHER" id="PTHR45964:SF5">
    <property type="entry name" value="WSCD FAMILY MEMBER CG9164"/>
    <property type="match status" value="1"/>
</dbReference>
<dbReference type="Pfam" id="PF13469">
    <property type="entry name" value="Sulfotransfer_3"/>
    <property type="match status" value="1"/>
</dbReference>
<dbReference type="SUPFAM" id="SSF52540">
    <property type="entry name" value="P-loop containing nucleoside triphosphate hydrolases"/>
    <property type="match status" value="1"/>
</dbReference>
<protein>
    <recommendedName>
        <fullName>WSCD family member CG9164</fullName>
    </recommendedName>
</protein>